<keyword id="KW-0963">Cytoplasm</keyword>
<keyword id="KW-0342">GTP-binding</keyword>
<keyword id="KW-0436">Ligase</keyword>
<keyword id="KW-0460">Magnesium</keyword>
<keyword id="KW-0479">Metal-binding</keyword>
<keyword id="KW-0547">Nucleotide-binding</keyword>
<keyword id="KW-0658">Purine biosynthesis</keyword>
<keyword id="KW-1185">Reference proteome</keyword>
<gene>
    <name evidence="1" type="primary">purA</name>
    <name type="ordered locus">TTE2696</name>
</gene>
<name>PURA_CALS4</name>
<proteinExistence type="inferred from homology"/>
<sequence length="428" mass="48025">MSVTVIVGAQWGDEGKGKITDYLAERSEVVVRYQGGNNAGHTVEKDGVQYKLHLIPSGILYPDKICVIGNGVVVDPSALLKEIEDLKAKGVEVKEDNLKISDRAHVVFPYHIKEDELEEKGKGDEDLGTTKKGIGPCYRDKTERIGIRMCDLMNAEVFREKLKKNLERKNKIFKDIYGEDGFDFEQIFETYREYAERLRPYVTDTSVLLYNLAKEGKKILFEGAQGTLLDLDFGTYPYVTASHPVAGGATIGAGIGPTMIDNVIGVVKAYTTRVGKGPFPTELKDEIGDFLREKGYEYGTTTGRPRRCGWIDIVMLRYAVRVSGITSLALTKLDTLTGLEKIKICTGYKINGKIIEDFPASLEELKMCEPIYEEMEGWSENIQDVRSFEDLPLNAKKYVKRLEELVGVEFSIISVGPEREETIVLRNF</sequence>
<protein>
    <recommendedName>
        <fullName evidence="1">Adenylosuccinate synthetase</fullName>
        <shortName evidence="1">AMPSase</shortName>
        <shortName evidence="1">AdSS</shortName>
        <ecNumber evidence="1">6.3.4.4</ecNumber>
    </recommendedName>
    <alternativeName>
        <fullName evidence="1">IMP--aspartate ligase</fullName>
    </alternativeName>
</protein>
<evidence type="ECO:0000255" key="1">
    <source>
        <dbReference type="HAMAP-Rule" id="MF_00011"/>
    </source>
</evidence>
<comment type="function">
    <text evidence="1">Plays an important role in the de novo pathway of purine nucleotide biosynthesis. Catalyzes the first committed step in the biosynthesis of AMP from IMP.</text>
</comment>
<comment type="catalytic activity">
    <reaction evidence="1">
        <text>IMP + L-aspartate + GTP = N(6)-(1,2-dicarboxyethyl)-AMP + GDP + phosphate + 2 H(+)</text>
        <dbReference type="Rhea" id="RHEA:15753"/>
        <dbReference type="ChEBI" id="CHEBI:15378"/>
        <dbReference type="ChEBI" id="CHEBI:29991"/>
        <dbReference type="ChEBI" id="CHEBI:37565"/>
        <dbReference type="ChEBI" id="CHEBI:43474"/>
        <dbReference type="ChEBI" id="CHEBI:57567"/>
        <dbReference type="ChEBI" id="CHEBI:58053"/>
        <dbReference type="ChEBI" id="CHEBI:58189"/>
        <dbReference type="EC" id="6.3.4.4"/>
    </reaction>
</comment>
<comment type="cofactor">
    <cofactor evidence="1">
        <name>Mg(2+)</name>
        <dbReference type="ChEBI" id="CHEBI:18420"/>
    </cofactor>
    <text evidence="1">Binds 1 Mg(2+) ion per subunit.</text>
</comment>
<comment type="pathway">
    <text evidence="1">Purine metabolism; AMP biosynthesis via de novo pathway; AMP from IMP: step 1/2.</text>
</comment>
<comment type="subunit">
    <text evidence="1">Homodimer.</text>
</comment>
<comment type="subcellular location">
    <subcellularLocation>
        <location evidence="1">Cytoplasm</location>
    </subcellularLocation>
</comment>
<comment type="similarity">
    <text evidence="1">Belongs to the adenylosuccinate synthetase family.</text>
</comment>
<reference key="1">
    <citation type="journal article" date="2002" name="Genome Res.">
        <title>A complete sequence of the T. tengcongensis genome.</title>
        <authorList>
            <person name="Bao Q."/>
            <person name="Tian Y."/>
            <person name="Li W."/>
            <person name="Xu Z."/>
            <person name="Xuan Z."/>
            <person name="Hu S."/>
            <person name="Dong W."/>
            <person name="Yang J."/>
            <person name="Chen Y."/>
            <person name="Xue Y."/>
            <person name="Xu Y."/>
            <person name="Lai X."/>
            <person name="Huang L."/>
            <person name="Dong X."/>
            <person name="Ma Y."/>
            <person name="Ling L."/>
            <person name="Tan H."/>
            <person name="Chen R."/>
            <person name="Wang J."/>
            <person name="Yu J."/>
            <person name="Yang H."/>
        </authorList>
    </citation>
    <scope>NUCLEOTIDE SEQUENCE [LARGE SCALE GENOMIC DNA]</scope>
    <source>
        <strain>DSM 15242 / JCM 11007 / NBRC 100824 / MB4</strain>
    </source>
</reference>
<dbReference type="EC" id="6.3.4.4" evidence="1"/>
<dbReference type="EMBL" id="AE008691">
    <property type="protein sequence ID" value="AAM25815.1"/>
    <property type="molecule type" value="Genomic_DNA"/>
</dbReference>
<dbReference type="RefSeq" id="WP_011026688.1">
    <property type="nucleotide sequence ID" value="NC_003869.1"/>
</dbReference>
<dbReference type="SMR" id="Q8R6T8"/>
<dbReference type="STRING" id="273068.TTE2696"/>
<dbReference type="KEGG" id="tte:TTE2696"/>
<dbReference type="eggNOG" id="COG0104">
    <property type="taxonomic scope" value="Bacteria"/>
</dbReference>
<dbReference type="HOGENOM" id="CLU_029848_0_0_9"/>
<dbReference type="OrthoDB" id="9807553at2"/>
<dbReference type="UniPathway" id="UPA00075">
    <property type="reaction ID" value="UER00335"/>
</dbReference>
<dbReference type="Proteomes" id="UP000000555">
    <property type="component" value="Chromosome"/>
</dbReference>
<dbReference type="GO" id="GO:0005737">
    <property type="term" value="C:cytoplasm"/>
    <property type="evidence" value="ECO:0007669"/>
    <property type="project" value="UniProtKB-SubCell"/>
</dbReference>
<dbReference type="GO" id="GO:0004019">
    <property type="term" value="F:adenylosuccinate synthase activity"/>
    <property type="evidence" value="ECO:0007669"/>
    <property type="project" value="UniProtKB-UniRule"/>
</dbReference>
<dbReference type="GO" id="GO:0005525">
    <property type="term" value="F:GTP binding"/>
    <property type="evidence" value="ECO:0007669"/>
    <property type="project" value="UniProtKB-UniRule"/>
</dbReference>
<dbReference type="GO" id="GO:0000287">
    <property type="term" value="F:magnesium ion binding"/>
    <property type="evidence" value="ECO:0007669"/>
    <property type="project" value="UniProtKB-UniRule"/>
</dbReference>
<dbReference type="GO" id="GO:0044208">
    <property type="term" value="P:'de novo' AMP biosynthetic process"/>
    <property type="evidence" value="ECO:0007669"/>
    <property type="project" value="UniProtKB-UniRule"/>
</dbReference>
<dbReference type="GO" id="GO:0046040">
    <property type="term" value="P:IMP metabolic process"/>
    <property type="evidence" value="ECO:0007669"/>
    <property type="project" value="TreeGrafter"/>
</dbReference>
<dbReference type="CDD" id="cd03108">
    <property type="entry name" value="AdSS"/>
    <property type="match status" value="1"/>
</dbReference>
<dbReference type="FunFam" id="1.10.300.10:FF:000001">
    <property type="entry name" value="Adenylosuccinate synthetase"/>
    <property type="match status" value="1"/>
</dbReference>
<dbReference type="FunFam" id="3.90.170.10:FF:000001">
    <property type="entry name" value="Adenylosuccinate synthetase"/>
    <property type="match status" value="1"/>
</dbReference>
<dbReference type="Gene3D" id="3.40.440.10">
    <property type="entry name" value="Adenylosuccinate Synthetase, subunit A, domain 1"/>
    <property type="match status" value="1"/>
</dbReference>
<dbReference type="Gene3D" id="1.10.300.10">
    <property type="entry name" value="Adenylosuccinate Synthetase, subunit A, domain 2"/>
    <property type="match status" value="1"/>
</dbReference>
<dbReference type="Gene3D" id="3.90.170.10">
    <property type="entry name" value="Adenylosuccinate Synthetase, subunit A, domain 3"/>
    <property type="match status" value="1"/>
</dbReference>
<dbReference type="HAMAP" id="MF_00011">
    <property type="entry name" value="Adenylosucc_synth"/>
    <property type="match status" value="1"/>
</dbReference>
<dbReference type="InterPro" id="IPR018220">
    <property type="entry name" value="Adenylosuccin_syn_GTP-bd"/>
</dbReference>
<dbReference type="InterPro" id="IPR033128">
    <property type="entry name" value="Adenylosuccin_syn_Lys_AS"/>
</dbReference>
<dbReference type="InterPro" id="IPR042109">
    <property type="entry name" value="Adenylosuccinate_synth_dom1"/>
</dbReference>
<dbReference type="InterPro" id="IPR042110">
    <property type="entry name" value="Adenylosuccinate_synth_dom2"/>
</dbReference>
<dbReference type="InterPro" id="IPR042111">
    <property type="entry name" value="Adenylosuccinate_synth_dom3"/>
</dbReference>
<dbReference type="InterPro" id="IPR001114">
    <property type="entry name" value="Adenylosuccinate_synthetase"/>
</dbReference>
<dbReference type="InterPro" id="IPR027417">
    <property type="entry name" value="P-loop_NTPase"/>
</dbReference>
<dbReference type="NCBIfam" id="NF002223">
    <property type="entry name" value="PRK01117.1"/>
    <property type="match status" value="1"/>
</dbReference>
<dbReference type="NCBIfam" id="TIGR00184">
    <property type="entry name" value="purA"/>
    <property type="match status" value="1"/>
</dbReference>
<dbReference type="PANTHER" id="PTHR11846">
    <property type="entry name" value="ADENYLOSUCCINATE SYNTHETASE"/>
    <property type="match status" value="1"/>
</dbReference>
<dbReference type="PANTHER" id="PTHR11846:SF0">
    <property type="entry name" value="ADENYLOSUCCINATE SYNTHETASE"/>
    <property type="match status" value="1"/>
</dbReference>
<dbReference type="Pfam" id="PF00709">
    <property type="entry name" value="Adenylsucc_synt"/>
    <property type="match status" value="1"/>
</dbReference>
<dbReference type="SMART" id="SM00788">
    <property type="entry name" value="Adenylsucc_synt"/>
    <property type="match status" value="1"/>
</dbReference>
<dbReference type="SUPFAM" id="SSF52540">
    <property type="entry name" value="P-loop containing nucleoside triphosphate hydrolases"/>
    <property type="match status" value="1"/>
</dbReference>
<dbReference type="PROSITE" id="PS01266">
    <property type="entry name" value="ADENYLOSUCCIN_SYN_1"/>
    <property type="match status" value="1"/>
</dbReference>
<dbReference type="PROSITE" id="PS00513">
    <property type="entry name" value="ADENYLOSUCCIN_SYN_2"/>
    <property type="match status" value="1"/>
</dbReference>
<accession>Q8R6T8</accession>
<feature type="chain" id="PRO_0000095249" description="Adenylosuccinate synthetase">
    <location>
        <begin position="1"/>
        <end position="428"/>
    </location>
</feature>
<feature type="active site" description="Proton acceptor" evidence="1">
    <location>
        <position position="13"/>
    </location>
</feature>
<feature type="active site" description="Proton donor" evidence="1">
    <location>
        <position position="41"/>
    </location>
</feature>
<feature type="binding site" evidence="1">
    <location>
        <begin position="12"/>
        <end position="18"/>
    </location>
    <ligand>
        <name>GTP</name>
        <dbReference type="ChEBI" id="CHEBI:37565"/>
    </ligand>
</feature>
<feature type="binding site" description="in other chain" evidence="1">
    <location>
        <begin position="13"/>
        <end position="16"/>
    </location>
    <ligand>
        <name>IMP</name>
        <dbReference type="ChEBI" id="CHEBI:58053"/>
        <note>ligand shared between dimeric partners</note>
    </ligand>
</feature>
<feature type="binding site" evidence="1">
    <location>
        <position position="13"/>
    </location>
    <ligand>
        <name>Mg(2+)</name>
        <dbReference type="ChEBI" id="CHEBI:18420"/>
    </ligand>
</feature>
<feature type="binding site" description="in other chain" evidence="1">
    <location>
        <begin position="38"/>
        <end position="41"/>
    </location>
    <ligand>
        <name>IMP</name>
        <dbReference type="ChEBI" id="CHEBI:58053"/>
        <note>ligand shared between dimeric partners</note>
    </ligand>
</feature>
<feature type="binding site" evidence="1">
    <location>
        <begin position="40"/>
        <end position="42"/>
    </location>
    <ligand>
        <name>GTP</name>
        <dbReference type="ChEBI" id="CHEBI:37565"/>
    </ligand>
</feature>
<feature type="binding site" evidence="1">
    <location>
        <position position="40"/>
    </location>
    <ligand>
        <name>Mg(2+)</name>
        <dbReference type="ChEBI" id="CHEBI:18420"/>
    </ligand>
</feature>
<feature type="binding site" description="in other chain" evidence="1">
    <location>
        <position position="130"/>
    </location>
    <ligand>
        <name>IMP</name>
        <dbReference type="ChEBI" id="CHEBI:58053"/>
        <note>ligand shared between dimeric partners</note>
    </ligand>
</feature>
<feature type="binding site" evidence="1">
    <location>
        <position position="144"/>
    </location>
    <ligand>
        <name>IMP</name>
        <dbReference type="ChEBI" id="CHEBI:58053"/>
        <note>ligand shared between dimeric partners</note>
    </ligand>
</feature>
<feature type="binding site" description="in other chain" evidence="1">
    <location>
        <position position="225"/>
    </location>
    <ligand>
        <name>IMP</name>
        <dbReference type="ChEBI" id="CHEBI:58053"/>
        <note>ligand shared between dimeric partners</note>
    </ligand>
</feature>
<feature type="binding site" description="in other chain" evidence="1">
    <location>
        <position position="240"/>
    </location>
    <ligand>
        <name>IMP</name>
        <dbReference type="ChEBI" id="CHEBI:58053"/>
        <note>ligand shared between dimeric partners</note>
    </ligand>
</feature>
<feature type="binding site" evidence="1">
    <location>
        <begin position="300"/>
        <end position="306"/>
    </location>
    <ligand>
        <name>substrate</name>
    </ligand>
</feature>
<feature type="binding site" description="in other chain" evidence="1">
    <location>
        <position position="304"/>
    </location>
    <ligand>
        <name>IMP</name>
        <dbReference type="ChEBI" id="CHEBI:58053"/>
        <note>ligand shared between dimeric partners</note>
    </ligand>
</feature>
<feature type="binding site" evidence="1">
    <location>
        <position position="306"/>
    </location>
    <ligand>
        <name>GTP</name>
        <dbReference type="ChEBI" id="CHEBI:37565"/>
    </ligand>
</feature>
<feature type="binding site" evidence="1">
    <location>
        <begin position="332"/>
        <end position="334"/>
    </location>
    <ligand>
        <name>GTP</name>
        <dbReference type="ChEBI" id="CHEBI:37565"/>
    </ligand>
</feature>
<feature type="binding site" evidence="1">
    <location>
        <begin position="414"/>
        <end position="416"/>
    </location>
    <ligand>
        <name>GTP</name>
        <dbReference type="ChEBI" id="CHEBI:37565"/>
    </ligand>
</feature>
<organism>
    <name type="scientific">Caldanaerobacter subterraneus subsp. tengcongensis (strain DSM 15242 / JCM 11007 / NBRC 100824 / MB4)</name>
    <name type="common">Thermoanaerobacter tengcongensis</name>
    <dbReference type="NCBI Taxonomy" id="273068"/>
    <lineage>
        <taxon>Bacteria</taxon>
        <taxon>Bacillati</taxon>
        <taxon>Bacillota</taxon>
        <taxon>Clostridia</taxon>
        <taxon>Thermoanaerobacterales</taxon>
        <taxon>Thermoanaerobacteraceae</taxon>
        <taxon>Caldanaerobacter</taxon>
    </lineage>
</organism>